<dbReference type="EC" id="2.3.1.275" evidence="1"/>
<dbReference type="EMBL" id="CP000792">
    <property type="protein sequence ID" value="EAT98209.1"/>
    <property type="molecule type" value="Genomic_DNA"/>
</dbReference>
<dbReference type="RefSeq" id="WP_012001303.1">
    <property type="nucleotide sequence ID" value="NC_009802.2"/>
</dbReference>
<dbReference type="SMR" id="A7ZBZ7"/>
<dbReference type="STRING" id="360104.CCC13826_0982"/>
<dbReference type="KEGG" id="cco:CCC13826_0982"/>
<dbReference type="eggNOG" id="COG0344">
    <property type="taxonomic scope" value="Bacteria"/>
</dbReference>
<dbReference type="HOGENOM" id="CLU_081254_2_0_7"/>
<dbReference type="OrthoDB" id="9777124at2"/>
<dbReference type="UniPathway" id="UPA00085"/>
<dbReference type="Proteomes" id="UP000001121">
    <property type="component" value="Chromosome"/>
</dbReference>
<dbReference type="GO" id="GO:0005886">
    <property type="term" value="C:plasma membrane"/>
    <property type="evidence" value="ECO:0007669"/>
    <property type="project" value="UniProtKB-SubCell"/>
</dbReference>
<dbReference type="GO" id="GO:0043772">
    <property type="term" value="F:acyl-phosphate glycerol-3-phosphate acyltransferase activity"/>
    <property type="evidence" value="ECO:0007669"/>
    <property type="project" value="UniProtKB-UniRule"/>
</dbReference>
<dbReference type="GO" id="GO:0008654">
    <property type="term" value="P:phospholipid biosynthetic process"/>
    <property type="evidence" value="ECO:0007669"/>
    <property type="project" value="UniProtKB-UniRule"/>
</dbReference>
<dbReference type="HAMAP" id="MF_01043">
    <property type="entry name" value="PlsY"/>
    <property type="match status" value="1"/>
</dbReference>
<dbReference type="InterPro" id="IPR003811">
    <property type="entry name" value="G3P_acylTferase_PlsY"/>
</dbReference>
<dbReference type="NCBIfam" id="TIGR00023">
    <property type="entry name" value="glycerol-3-phosphate 1-O-acyltransferase PlsY"/>
    <property type="match status" value="1"/>
</dbReference>
<dbReference type="PANTHER" id="PTHR30309:SF0">
    <property type="entry name" value="GLYCEROL-3-PHOSPHATE ACYLTRANSFERASE-RELATED"/>
    <property type="match status" value="1"/>
</dbReference>
<dbReference type="PANTHER" id="PTHR30309">
    <property type="entry name" value="INNER MEMBRANE PROTEIN YGIH"/>
    <property type="match status" value="1"/>
</dbReference>
<dbReference type="Pfam" id="PF02660">
    <property type="entry name" value="G3P_acyltransf"/>
    <property type="match status" value="1"/>
</dbReference>
<dbReference type="SMART" id="SM01207">
    <property type="entry name" value="G3P_acyltransf"/>
    <property type="match status" value="1"/>
</dbReference>
<comment type="function">
    <text evidence="1">Catalyzes the transfer of an acyl group from acyl-phosphate (acyl-PO(4)) to glycerol-3-phosphate (G3P) to form lysophosphatidic acid (LPA). This enzyme utilizes acyl-phosphate as fatty acyl donor, but not acyl-CoA or acyl-ACP.</text>
</comment>
<comment type="catalytic activity">
    <reaction evidence="1">
        <text>an acyl phosphate + sn-glycerol 3-phosphate = a 1-acyl-sn-glycero-3-phosphate + phosphate</text>
        <dbReference type="Rhea" id="RHEA:34075"/>
        <dbReference type="ChEBI" id="CHEBI:43474"/>
        <dbReference type="ChEBI" id="CHEBI:57597"/>
        <dbReference type="ChEBI" id="CHEBI:57970"/>
        <dbReference type="ChEBI" id="CHEBI:59918"/>
        <dbReference type="EC" id="2.3.1.275"/>
    </reaction>
</comment>
<comment type="pathway">
    <text evidence="1">Lipid metabolism; phospholipid metabolism.</text>
</comment>
<comment type="subunit">
    <text evidence="1">Probably interacts with PlsX.</text>
</comment>
<comment type="subcellular location">
    <subcellularLocation>
        <location evidence="1">Cell inner membrane</location>
        <topology evidence="1">Multi-pass membrane protein</topology>
    </subcellularLocation>
</comment>
<comment type="similarity">
    <text evidence="1">Belongs to the PlsY family.</text>
</comment>
<feature type="chain" id="PRO_1000072987" description="Glycerol-3-phosphate acyltransferase">
    <location>
        <begin position="1"/>
        <end position="203"/>
    </location>
</feature>
<feature type="transmembrane region" description="Helical" evidence="1">
    <location>
        <begin position="3"/>
        <end position="23"/>
    </location>
</feature>
<feature type="transmembrane region" description="Helical" evidence="1">
    <location>
        <begin position="61"/>
        <end position="81"/>
    </location>
</feature>
<feature type="transmembrane region" description="Helical" evidence="1">
    <location>
        <begin position="87"/>
        <end position="107"/>
    </location>
</feature>
<feature type="transmembrane region" description="Helical" evidence="1">
    <location>
        <begin position="118"/>
        <end position="138"/>
    </location>
</feature>
<feature type="transmembrane region" description="Helical" evidence="1">
    <location>
        <begin position="144"/>
        <end position="164"/>
    </location>
</feature>
<feature type="transmembrane region" description="Helical" evidence="1">
    <location>
        <begin position="172"/>
        <end position="192"/>
    </location>
</feature>
<keyword id="KW-0997">Cell inner membrane</keyword>
<keyword id="KW-1003">Cell membrane</keyword>
<keyword id="KW-0444">Lipid biosynthesis</keyword>
<keyword id="KW-0443">Lipid metabolism</keyword>
<keyword id="KW-0472">Membrane</keyword>
<keyword id="KW-0594">Phospholipid biosynthesis</keyword>
<keyword id="KW-1208">Phospholipid metabolism</keyword>
<keyword id="KW-0808">Transferase</keyword>
<keyword id="KW-0812">Transmembrane</keyword>
<keyword id="KW-1133">Transmembrane helix</keyword>
<proteinExistence type="inferred from homology"/>
<gene>
    <name evidence="1" type="primary">plsY</name>
    <name type="ordered locus">Ccon26_04020</name>
    <name type="ORF">CCC13826_0982</name>
</gene>
<protein>
    <recommendedName>
        <fullName evidence="1">Glycerol-3-phosphate acyltransferase</fullName>
    </recommendedName>
    <alternativeName>
        <fullName evidence="1">Acyl-PO4 G3P acyltransferase</fullName>
    </alternativeName>
    <alternativeName>
        <fullName evidence="1">Acyl-phosphate--glycerol-3-phosphate acyltransferase</fullName>
    </alternativeName>
    <alternativeName>
        <fullName evidence="1">G3P acyltransferase</fullName>
        <shortName evidence="1">GPAT</shortName>
        <ecNumber evidence="1">2.3.1.275</ecNumber>
    </alternativeName>
    <alternativeName>
        <fullName evidence="1">Lysophosphatidic acid synthase</fullName>
        <shortName evidence="1">LPA synthase</shortName>
    </alternativeName>
</protein>
<sequence>MQNLILYAVSYLLGSIPSGLILAKIFGHVDIKKEGSKSIGATNVLRVLKQTNPKLAKKLAILTVVCDVLKGVLPLIVASFLGASQSVLWTMAVLSVAGHCFSIFLGFQGGKGVATGAGVLAFFLPVEIIIALVVWFLVGKFLKISSLASLCALIALIASSFIIHPELDEIYTHAPILIIAFLVVYKHIPNIVRLLSGKEQKVV</sequence>
<evidence type="ECO:0000255" key="1">
    <source>
        <dbReference type="HAMAP-Rule" id="MF_01043"/>
    </source>
</evidence>
<name>PLSY_CAMC1</name>
<organism>
    <name type="scientific">Campylobacter concisus (strain 13826)</name>
    <dbReference type="NCBI Taxonomy" id="360104"/>
    <lineage>
        <taxon>Bacteria</taxon>
        <taxon>Pseudomonadati</taxon>
        <taxon>Campylobacterota</taxon>
        <taxon>Epsilonproteobacteria</taxon>
        <taxon>Campylobacterales</taxon>
        <taxon>Campylobacteraceae</taxon>
        <taxon>Campylobacter</taxon>
    </lineage>
</organism>
<accession>A7ZBZ7</accession>
<reference key="1">
    <citation type="submission" date="2007-10" db="EMBL/GenBank/DDBJ databases">
        <title>Genome sequence of Campylobacter concisus 13826 isolated from human feces.</title>
        <authorList>
            <person name="Fouts D.E."/>
            <person name="Mongodin E.F."/>
            <person name="Puiu D."/>
            <person name="Sebastian Y."/>
            <person name="Miller W.G."/>
            <person name="Mandrell R.E."/>
            <person name="On S."/>
            <person name="Nelson K.E."/>
        </authorList>
    </citation>
    <scope>NUCLEOTIDE SEQUENCE [LARGE SCALE GENOMIC DNA]</scope>
    <source>
        <strain>13826</strain>
    </source>
</reference>